<accession>F5B8W2</accession>
<protein>
    <recommendedName>
        <fullName evidence="7">Conglutin beta 4</fullName>
    </recommendedName>
    <allergenName evidence="6">Lup an 1</allergenName>
</protein>
<gene>
    <name evidence="7" type="primary">BETA4</name>
</gene>
<organism>
    <name type="scientific">Lupinus angustifolius</name>
    <name type="common">Narrow-leaved blue lupine</name>
    <dbReference type="NCBI Taxonomy" id="3871"/>
    <lineage>
        <taxon>Eukaryota</taxon>
        <taxon>Viridiplantae</taxon>
        <taxon>Streptophyta</taxon>
        <taxon>Embryophyta</taxon>
        <taxon>Tracheophyta</taxon>
        <taxon>Spermatophyta</taxon>
        <taxon>Magnoliopsida</taxon>
        <taxon>eudicotyledons</taxon>
        <taxon>Gunneridae</taxon>
        <taxon>Pentapetalae</taxon>
        <taxon>rosids</taxon>
        <taxon>fabids</taxon>
        <taxon>Fabales</taxon>
        <taxon>Fabaceae</taxon>
        <taxon>Papilionoideae</taxon>
        <taxon>50 kb inversion clade</taxon>
        <taxon>genistoids sensu lato</taxon>
        <taxon>core genistoids</taxon>
        <taxon>Genisteae</taxon>
        <taxon>Lupinus</taxon>
    </lineage>
</organism>
<keyword id="KW-0020">Allergen</keyword>
<keyword id="KW-0325">Glycoprotein</keyword>
<keyword id="KW-0708">Seed storage protein</keyword>
<keyword id="KW-0732">Signal</keyword>
<keyword id="KW-0758">Storage protein</keyword>
<comment type="function">
    <text evidence="5">Seed storage protein. Accumulates during seed development and is hydrolyzed after germination to provide a carbon and nitrogen source for the developing seedling.</text>
</comment>
<comment type="subunit">
    <text evidence="9">Component of globulins complexes which accumulate in seeds.</text>
</comment>
<comment type="developmental stage">
    <text evidence="5">Increased expression during seed filling, with a maximum between 33 and 38 days after anthesis.</text>
</comment>
<comment type="allergen">
    <text evidence="4">Causes an allergic reaction in human. Lup an 1 is the major lupin allergen.</text>
</comment>
<comment type="miscellaneous">
    <text evidence="10">The variability of the residues taking part of IgE-binding epitopes might be responsible of the difference in cross-reactivity among legumes.</text>
</comment>
<comment type="similarity">
    <text evidence="8">Belongs to the 7S seed storage protein family.</text>
</comment>
<dbReference type="EMBL" id="HQ670412">
    <property type="protein sequence ID" value="AEB33715.1"/>
    <property type="molecule type" value="mRNA"/>
</dbReference>
<dbReference type="SMR" id="F5B8W2"/>
<dbReference type="Allergome" id="4015">
    <property type="allergen name" value="Lup an 1"/>
</dbReference>
<dbReference type="GlyCosmos" id="F5B8W2">
    <property type="glycosylation" value="2 sites, No reported glycans"/>
</dbReference>
<dbReference type="GO" id="GO:0045735">
    <property type="term" value="F:nutrient reservoir activity"/>
    <property type="evidence" value="ECO:0007669"/>
    <property type="project" value="UniProtKB-KW"/>
</dbReference>
<dbReference type="CDD" id="cd02245">
    <property type="entry name" value="cupin_7S_vicilin-like_C"/>
    <property type="match status" value="1"/>
</dbReference>
<dbReference type="CDD" id="cd02244">
    <property type="entry name" value="cupin_7S_vicilin-like_N"/>
    <property type="match status" value="1"/>
</dbReference>
<dbReference type="Gene3D" id="2.60.120.10">
    <property type="entry name" value="Jelly Rolls"/>
    <property type="match status" value="2"/>
</dbReference>
<dbReference type="InterPro" id="IPR006045">
    <property type="entry name" value="Cupin_1"/>
</dbReference>
<dbReference type="InterPro" id="IPR014710">
    <property type="entry name" value="RmlC-like_jellyroll"/>
</dbReference>
<dbReference type="InterPro" id="IPR011051">
    <property type="entry name" value="RmlC_Cupin_sf"/>
</dbReference>
<dbReference type="InterPro" id="IPR050253">
    <property type="entry name" value="Seed_Storage-Functional"/>
</dbReference>
<dbReference type="PANTHER" id="PTHR31189">
    <property type="entry name" value="OS03G0336100 PROTEIN-RELATED"/>
    <property type="match status" value="1"/>
</dbReference>
<dbReference type="PANTHER" id="PTHR31189:SF41">
    <property type="entry name" value="VICILIN C72"/>
    <property type="match status" value="1"/>
</dbReference>
<dbReference type="Pfam" id="PF00190">
    <property type="entry name" value="Cupin_1"/>
    <property type="match status" value="2"/>
</dbReference>
<dbReference type="SMART" id="SM00835">
    <property type="entry name" value="Cupin_1"/>
    <property type="match status" value="2"/>
</dbReference>
<dbReference type="SUPFAM" id="SSF51182">
    <property type="entry name" value="RmlC-like cupins"/>
    <property type="match status" value="1"/>
</dbReference>
<feature type="signal peptide" evidence="1">
    <location>
        <begin position="1"/>
        <end position="30"/>
    </location>
</feature>
<feature type="chain" id="PRO_0000435266" description="Conglutin beta 4" evidence="1">
    <location>
        <begin position="31"/>
        <end position="590"/>
    </location>
</feature>
<feature type="domain" description="Cupin type-1 1" evidence="1">
    <location>
        <begin position="174"/>
        <end position="332"/>
    </location>
</feature>
<feature type="domain" description="Cupin type-1 2" evidence="1">
    <location>
        <begin position="391"/>
        <end position="548"/>
    </location>
</feature>
<feature type="region of interest" description="Disordered" evidence="3">
    <location>
        <begin position="38"/>
        <end position="175"/>
    </location>
</feature>
<feature type="region of interest" description="Disordered" evidence="3">
    <location>
        <begin position="340"/>
        <end position="362"/>
    </location>
</feature>
<feature type="region of interest" description="Disordered" evidence="3">
    <location>
        <begin position="374"/>
        <end position="396"/>
    </location>
</feature>
<feature type="region of interest" description="Disordered" evidence="3">
    <location>
        <begin position="559"/>
        <end position="579"/>
    </location>
</feature>
<feature type="compositionally biased region" description="Basic and acidic residues" evidence="3">
    <location>
        <begin position="38"/>
        <end position="105"/>
    </location>
</feature>
<feature type="compositionally biased region" description="Low complexity" evidence="3">
    <location>
        <begin position="137"/>
        <end position="146"/>
    </location>
</feature>
<feature type="compositionally biased region" description="Basic and acidic residues" evidence="3">
    <location>
        <begin position="346"/>
        <end position="362"/>
    </location>
</feature>
<feature type="glycosylation site" description="N-linked (GlcNAc...) asparagine" evidence="2">
    <location>
        <position position="239"/>
    </location>
</feature>
<feature type="glycosylation site" description="N-linked (GlcNAc...) asparagine" evidence="2">
    <location>
        <position position="498"/>
    </location>
</feature>
<sequence>MIKMRVRFPTLVLLLGIVFLMAVSIGIAYGEKNVIKNHERPQEREQEERDPRQQPRPHHQEEQEREHRREEERDREPSRGRSESEESREEEREQRREPRREREQEQQPQHGRREEEEEWQPRRQRPQSRREEREQEQGSSSSSRRQSGYERREEREQEQEQGSRSDSRRQRNPYYFSSERFQTLYRNRNGQIRVLERFDQRTDRLENLQNYRIVEFQSKPNTLILPKHSDADYILVVLNGSATITIVNPDKRQSYNLENGDALRLPAGTTSYILNPDDNQNLRVVKLAIPINNPGNFYDFYPSSSKDQQSYFSGFSRNTLEATFNTRYEEIQRILLGNEDEQEDDEQRHGQEQSHQDEGVIVRVSKEQVQELRKYAQSSSRKGKPSKSGPFNLRSNKPIYSNKFGNFYEITPNRNPQAQDLDISLTFIEINEGALLLPHYNSKAIFVVLVDEGEGNYELVGIRDQQRQQDEQEVRRYSARLSEGDIFVIPAGHPISINASSNLRLLGFGINADENQRNFLAGSEDNVIRQLDTEVKGLTFPGSTEDVERLIKNQQQSYFANAQPQQQQQREREGRRGRRGHISSILSTLY</sequence>
<name>CONB4_LUPAN</name>
<evidence type="ECO:0000255" key="1"/>
<evidence type="ECO:0000255" key="2">
    <source>
        <dbReference type="PROSITE-ProRule" id="PRU00498"/>
    </source>
</evidence>
<evidence type="ECO:0000256" key="3">
    <source>
        <dbReference type="SAM" id="MobiDB-lite"/>
    </source>
</evidence>
<evidence type="ECO:0000269" key="4">
    <source>
    </source>
</evidence>
<evidence type="ECO:0000269" key="5">
    <source>
    </source>
</evidence>
<evidence type="ECO:0000303" key="6">
    <source>
    </source>
</evidence>
<evidence type="ECO:0000303" key="7">
    <source>
    </source>
</evidence>
<evidence type="ECO:0000305" key="8"/>
<evidence type="ECO:0000305" key="9">
    <source>
    </source>
</evidence>
<evidence type="ECO:0000305" key="10">
    <source ref="4"/>
</evidence>
<reference key="1">
    <citation type="journal article" date="2011" name="BMC Plant Biol.">
        <title>Identification and characterisation of seed storage protein transcripts from Lupinus angustifolius.</title>
        <authorList>
            <person name="Foley R.C."/>
            <person name="Gao L.-L."/>
            <person name="Spriggs A."/>
            <person name="Soo L.Y.C."/>
            <person name="Goggin D.E."/>
            <person name="Smith P.M.C."/>
            <person name="Atkins C.A."/>
            <person name="Singh K.B."/>
        </authorList>
    </citation>
    <scope>NUCLEOTIDE SEQUENCE [MRNA]</scope>
    <scope>FUNCTION</scope>
    <scope>DEVELOPMENTAL STAGE</scope>
    <source>
        <strain>cv. Tanjil</strain>
        <tissue>Seed</tissue>
    </source>
</reference>
<reference key="2">
    <citation type="journal article" date="2008" name="J. Agric. Food Chem.">
        <title>Proteomic analysis of lupin seed proteins to identify conglutin Beta as an allergen, Lup an 1.</title>
        <authorList>
            <person name="Goggin D.E."/>
            <person name="Mir G."/>
            <person name="Smith W.B."/>
            <person name="Stuckey M."/>
            <person name="Smith P.M."/>
        </authorList>
    </citation>
    <scope>ALLERGEN</scope>
</reference>
<reference key="3">
    <citation type="journal article" date="2012" name="J. Agric. Food Chem.">
        <title>Release of flavonoids from lupin globulin proteins during digestion in a model system.</title>
        <authorList>
            <person name="Czubinski J."/>
            <person name="Dwiecki K."/>
            <person name="Siger A."/>
            <person name="Kachlicki P."/>
            <person name="Neunert G."/>
            <person name="Lampart-Szczapa E."/>
            <person name="Nogala-Kalucka M."/>
        </authorList>
    </citation>
    <scope>SUBUNIT</scope>
    <source>
        <strain>cv. Zeus</strain>
    </source>
</reference>
<reference key="4">
    <citation type="book" date="2015" name="Bioinformatics and Biomedical Engineering, LNCS 9043">
        <title>Lupin allergy: Uncovering structural features and epitopes of b-conglutin proteins in Lupinus angustifolius L. with a focus on cross-allergenic reactivity to peanut and other legumes.</title>
        <editorList>
            <person name="Ortuno F."/>
            <person name="Rojas I."/>
        </editorList>
        <authorList>
            <person name="Jimenez-Lopez J.C."/>
            <person name="Lima-Cabello E."/>
            <person name="Melser S."/>
            <person name="Foley R.C."/>
            <person name="Singh K.B."/>
        </authorList>
    </citation>
    <scope>3D-STRUCTURE MODELING</scope>
</reference>
<proteinExistence type="evidence at protein level"/>